<keyword id="KW-0235">DNA replication</keyword>
<keyword id="KW-0238">DNA-binding</keyword>
<keyword id="KW-0239">DNA-directed DNA polymerase</keyword>
<keyword id="KW-0255">Endonuclease</keyword>
<keyword id="KW-0378">Hydrolase</keyword>
<keyword id="KW-0460">Magnesium</keyword>
<keyword id="KW-0479">Metal-binding</keyword>
<keyword id="KW-0511">Multifunctional enzyme</keyword>
<keyword id="KW-0540">Nuclease</keyword>
<keyword id="KW-0548">Nucleotidyltransferase</keyword>
<keyword id="KW-0695">RNA-directed DNA polymerase</keyword>
<keyword id="KW-0808">Transferase</keyword>
<feature type="chain" id="PRO_0000222345" description="Protein P">
    <location>
        <begin position="1"/>
        <end position="750" status="greater than"/>
    </location>
</feature>
<feature type="domain" description="Reverse transcriptase" evidence="2">
    <location>
        <begin position="346"/>
        <end position="589"/>
    </location>
</feature>
<feature type="region of interest" description="Terminal protein domain (TP)" evidence="1">
    <location>
        <begin position="1"/>
        <end position="177"/>
    </location>
</feature>
<feature type="region of interest" description="Spacer" evidence="1">
    <location>
        <begin position="178"/>
        <end position="335"/>
    </location>
</feature>
<feature type="region of interest" description="Disordered" evidence="3">
    <location>
        <begin position="186"/>
        <end position="229"/>
    </location>
</feature>
<feature type="region of interest" description="Disordered" evidence="3">
    <location>
        <begin position="279"/>
        <end position="302"/>
    </location>
</feature>
<feature type="region of interest" description="Polymerase/reverse transcriptase domain (RT)" evidence="1">
    <location>
        <begin position="336"/>
        <end position="679"/>
    </location>
</feature>
<feature type="region of interest" description="RnaseH domain (RH)" evidence="1">
    <location>
        <begin position="680"/>
        <end position="750"/>
    </location>
</feature>
<feature type="compositionally biased region" description="Low complexity" evidence="3">
    <location>
        <begin position="210"/>
        <end position="220"/>
    </location>
</feature>
<feature type="compositionally biased region" description="Polar residues" evidence="3">
    <location>
        <begin position="279"/>
        <end position="288"/>
    </location>
</feature>
<feature type="binding site" evidence="2">
    <location>
        <position position="418"/>
    </location>
    <ligand>
        <name>Mg(2+)</name>
        <dbReference type="ChEBI" id="CHEBI:18420"/>
        <note>catalytic</note>
    </ligand>
</feature>
<feature type="binding site" evidence="2">
    <location>
        <position position="540"/>
    </location>
    <ligand>
        <name>Mg(2+)</name>
        <dbReference type="ChEBI" id="CHEBI:18420"/>
        <note>catalytic</note>
    </ligand>
</feature>
<feature type="binding site" evidence="2">
    <location>
        <position position="541"/>
    </location>
    <ligand>
        <name>Mg(2+)</name>
        <dbReference type="ChEBI" id="CHEBI:18420"/>
        <note>catalytic</note>
    </ligand>
</feature>
<feature type="site" description="Priming of reverse-transcription by covalently linking the first nucleotide of the (-)DNA" evidence="1">
    <location>
        <position position="63"/>
    </location>
</feature>
<feature type="mutagenesis site" description="99% loss of polymerase activity." evidence="5">
    <original>YP</original>
    <variation>SA</variation>
    <location>
        <begin position="133"/>
        <end position="134"/>
    </location>
</feature>
<feature type="mutagenesis site" description="Complete loss of polymerase activity." evidence="5">
    <original>D</original>
    <variation>H</variation>
    <location>
        <position position="540"/>
    </location>
</feature>
<feature type="mutagenesis site" description="90% loss of polymerase activity." evidence="5">
    <original>E</original>
    <variation>H</variation>
    <location>
        <position position="718"/>
    </location>
</feature>
<feature type="mutagenesis site" description="Complete loss of polymerase activity." evidence="5">
    <original>A</original>
    <variation>D</variation>
    <location>
        <position position="725"/>
    </location>
</feature>
<feature type="mutagenesis site" description="80% loss of polymerase activity." evidence="5">
    <original>D</original>
    <variation>V</variation>
    <location>
        <position position="737"/>
    </location>
</feature>
<feature type="non-terminal residue">
    <location>
        <position position="750"/>
    </location>
</feature>
<protein>
    <recommendedName>
        <fullName>Protein P</fullName>
    </recommendedName>
    <domain>
        <recommendedName>
            <fullName>DNA-directed DNA polymerase</fullName>
            <ecNumber>2.7.7.7</ecNumber>
        </recommendedName>
    </domain>
    <domain>
        <recommendedName>
            <fullName>RNA-directed DNA polymerase</fullName>
            <ecNumber>2.7.7.49</ecNumber>
        </recommendedName>
    </domain>
    <domain>
        <recommendedName>
            <fullName>Ribonuclease H</fullName>
            <ecNumber>3.1.26.4</ecNumber>
        </recommendedName>
    </domain>
</protein>
<comment type="function">
    <text evidence="1 4 6">Multifunctional enzyme that converts the viral RNA genome into dsDNA in viral cytoplasmic capsids. This enzyme displays a DNA polymerase activity that can copy either DNA or RNA templates, and a ribonuclease H (RNase H) activity that cleaves the RNA strand of RNA-DNA heteroduplexes in a partially processive 3'- to 5'-endonucleasic mode. Neo-synthesized pregenomic RNA (pgRNA) are encapsidated together with the P protein, and reverse-transcribed inside the nucleocapsid. Initiation of reverse-transcription occurs first by binding the epsilon loop on the pgRNA genome, and is initiated by protein priming, thereby the 5'-end of (-)DNA is covalently linked to P protein. Partial (+)DNA is synthesized from the (-)DNA template and generates the relaxed circular DNA (RC-DNA) genome. After budding and infection, the RC-DNA migrates in the nucleus, and is converted into a plasmid-like covalently closed circular DNA (cccDNA). The activity of P protein does not seem to be necessary for cccDNA generation, and is presumably released from (+)DNA by host nuclear DNA repair machinery (By similarity).</text>
</comment>
<comment type="catalytic activity">
    <reaction evidence="2">
        <text>DNA(n) + a 2'-deoxyribonucleoside 5'-triphosphate = DNA(n+1) + diphosphate</text>
        <dbReference type="Rhea" id="RHEA:22508"/>
        <dbReference type="Rhea" id="RHEA-COMP:17339"/>
        <dbReference type="Rhea" id="RHEA-COMP:17340"/>
        <dbReference type="ChEBI" id="CHEBI:33019"/>
        <dbReference type="ChEBI" id="CHEBI:61560"/>
        <dbReference type="ChEBI" id="CHEBI:173112"/>
        <dbReference type="EC" id="2.7.7.7"/>
    </reaction>
</comment>
<comment type="catalytic activity">
    <reaction evidence="2">
        <text>DNA(n) + a 2'-deoxyribonucleoside 5'-triphosphate = DNA(n+1) + diphosphate</text>
        <dbReference type="Rhea" id="RHEA:22508"/>
        <dbReference type="Rhea" id="RHEA-COMP:17339"/>
        <dbReference type="Rhea" id="RHEA-COMP:17340"/>
        <dbReference type="ChEBI" id="CHEBI:33019"/>
        <dbReference type="ChEBI" id="CHEBI:61560"/>
        <dbReference type="ChEBI" id="CHEBI:173112"/>
        <dbReference type="EC" id="2.7.7.49"/>
    </reaction>
</comment>
<comment type="catalytic activity">
    <reaction>
        <text>Endonucleolytic cleavage to 5'-phosphomonoester.</text>
        <dbReference type="EC" id="3.1.26.4"/>
    </reaction>
</comment>
<comment type="activity regulation">
    <text evidence="1">Activated by host HSP70 and HSP40 in vitro to be able to bind the epsilon loop of the pgRNA. Because deletion of the RNase H region renders the protein partly chaperone-independent, the chaperones may be needed indirectly to relieve occlusion of the RNA-binding site by this domain. Inhibited by several reverse-transcriptase inhibitors: Lamivudine, Adefovir and Entecavir (By similarity).</text>
</comment>
<comment type="domain">
    <text evidence="1">Terminal protein domain (TP) is hepadnavirus-specific. Spacer domain is highly variable and separates the TP and RT domains. Polymerase/reverse-transcriptase domain (RT) and ribonuclease H domain (RH) are similar to retrovirus reverse transcriptase/RNase H (By similarity).</text>
</comment>
<comment type="domain">
    <text evidence="1">The polymerase/reverse transcriptase (RT) and ribonuclease H (RH) domains are structured in five subdomains: finger, palm, thumb, connection and RNase H. Within the palm subdomain, the 'primer grip' region is thought to be involved in the positioning of the primer terminus for accommodating the incoming nucleotide. The RH domain stabilizes the association of RT with primer-template (By similarity).</text>
</comment>
<comment type="miscellaneous">
    <text evidence="1">Hepadnaviral virions contain probably just one P protein molecule per particle.</text>
</comment>
<comment type="similarity">
    <text evidence="7">Belongs to the hepadnaviridae P protein family.</text>
</comment>
<gene>
    <name type="primary">P</name>
</gene>
<name>DPOL_HBVD1</name>
<accession>P03155</accession>
<evidence type="ECO:0000250" key="1"/>
<evidence type="ECO:0000255" key="2">
    <source>
        <dbReference type="PROSITE-ProRule" id="PRU00405"/>
    </source>
</evidence>
<evidence type="ECO:0000256" key="3">
    <source>
        <dbReference type="SAM" id="MobiDB-lite"/>
    </source>
</evidence>
<evidence type="ECO:0000269" key="4">
    <source>
    </source>
</evidence>
<evidence type="ECO:0000269" key="5">
    <source>
    </source>
</evidence>
<evidence type="ECO:0000269" key="6">
    <source>
    </source>
</evidence>
<evidence type="ECO:0000305" key="7"/>
<proteinExistence type="evidence at protein level"/>
<organism>
    <name type="scientific">Hepatitis B virus genotype D subtype adw (isolate United Kingdom/adyw/1979)</name>
    <name type="common">HBV-D</name>
    <dbReference type="NCBI Taxonomy" id="10419"/>
    <lineage>
        <taxon>Viruses</taxon>
        <taxon>Riboviria</taxon>
        <taxon>Pararnavirae</taxon>
        <taxon>Artverviricota</taxon>
        <taxon>Revtraviricetes</taxon>
        <taxon>Blubervirales</taxon>
        <taxon>Hepadnaviridae</taxon>
        <taxon>Orthohepadnavirus</taxon>
        <taxon>Hepatitis B virus</taxon>
    </lineage>
</organism>
<organismHost>
    <name type="scientific">Homo sapiens</name>
    <name type="common">Human</name>
    <dbReference type="NCBI Taxonomy" id="9606"/>
</organismHost>
<organismHost>
    <name type="scientific">Pan troglodytes</name>
    <name type="common">Chimpanzee</name>
    <dbReference type="NCBI Taxonomy" id="9598"/>
</organismHost>
<reference key="1">
    <citation type="journal article" date="1979" name="Nature">
        <title>Hepatitis B virus genes and their expression in E. coli.</title>
        <authorList>
            <person name="Pasek M."/>
            <person name="Goto T."/>
            <person name="Gilbert W."/>
            <person name="Zink B."/>
            <person name="Schaller H."/>
            <person name="McKay P."/>
            <person name="Leadbetter G."/>
            <person name="Murray K."/>
        </authorList>
    </citation>
    <scope>NUCLEOTIDE SEQUENCE [GENOMIC RNA]</scope>
</reference>
<reference key="2">
    <citation type="journal article" date="1988" name="EMBO J.">
        <title>The amino-terminal domain of the hepadnaviral P-gene encodes the terminal protein (genome-linked protein) believed to prime reverse transcription.</title>
        <authorList>
            <person name="Bartenschlager R."/>
            <person name="Schaller H."/>
        </authorList>
    </citation>
    <scope>FUNCTION</scope>
</reference>
<reference key="3">
    <citation type="journal article" date="1990" name="J. Virol.">
        <title>Mutational analysis of the hepatitis B virus P gene product: domain structure and RNase H activity.</title>
        <authorList>
            <person name="Radziwill G."/>
            <person name="Tucker W."/>
            <person name="Schaller H."/>
        </authorList>
    </citation>
    <scope>MUTAGENESIS OF 133-TYR-PRO-134; ASP-540; GLU-718; ALA-725 AND ASP-737</scope>
</reference>
<reference key="4">
    <citation type="journal article" date="1992" name="EMBO J.">
        <title>Hepadnaviral assembly is initiated by polymerase binding to the encapsidation signal in the viral RNA genome.</title>
        <authorList>
            <person name="Bartenschlager R."/>
            <person name="Schaller H."/>
        </authorList>
    </citation>
    <scope>FUNCTION</scope>
</reference>
<reference key="5">
    <citation type="journal article" date="2007" name="World J. Gastroenterol.">
        <title>Hepatitis B virus replication.</title>
        <authorList>
            <person name="Beck J."/>
            <person name="Nassal M."/>
        </authorList>
    </citation>
    <scope>REVIEW</scope>
</reference>
<sequence>MPLSYQRFRRLLLLDDEAGPLEEELPRLADEDLNRRVAEDLNLGNLNVSIPWTHKVGNFTGLYSSTVPVFNPHWKPPSFPNIHLHQDIIKKCEQFVGPLTVNEKRRLKLIMPARFYPNFTKYLPLDKGIKPYYPEHLVNHYFQTRHYLHTLWKAGVLYKRVSTHSASFCGSPYSWEQELQHGAESFHQQSSGILSRPPVGSSLQSKHQQSRLGLQSQQGHLARRQQGRSWSIRARVHPTARRPFGVEPSGSGHNANLASKSASCLYQSPVRTAAYPAVSTSENHSSSGHALELHNLPPNSARSQSERPVFPCWWLQFRDSKPCSDYYLSHIVNLLEDWGPCAEHGEHHIRIPRTPARVTGGVFLVDKNPHNTAESRLVVDFSQFSRGNYRVSWPKFAVPNLQSLTNLLSSNLSWLSLDVSAAFYHLPLHPAAMPHLLVGSSGLSRYVARLSSNSRIINHQHGILQNLHDSCSRNLYVSLLLLYKTFGWKLHLYSHPIILGFRKIPMGVGLSPFLLAQFTSAICSVVRRAFPHCLAFSYMDDVVLGAKSVQHLESLFTAVTNFLLSLGIHLNPNKTKRWGYSLNFMGYVIGCWGSLPQDHIIHKIKECFRKLPVHRPIDWKVCQRIVGLLGFAAPFTQCGYPALMPLYACIQSKQAFTFSPTYKAFLCKQYLNLYPVAEQRPGLCQVFADATPTGWGLVMGHQRMRGTFLAPLPIHTAELLAACFARSRSGANILGTDNSVVLSRKYTSFP</sequence>
<dbReference type="EC" id="2.7.7.7"/>
<dbReference type="EC" id="2.7.7.49"/>
<dbReference type="EC" id="3.1.26.4"/>
<dbReference type="EMBL" id="J02202">
    <property type="status" value="NOT_ANNOTATED_CDS"/>
    <property type="molecule type" value="Genomic_RNA"/>
</dbReference>
<dbReference type="PIR" id="A00701">
    <property type="entry name" value="JDVLVH"/>
</dbReference>
<dbReference type="GO" id="GO:0003677">
    <property type="term" value="F:DNA binding"/>
    <property type="evidence" value="ECO:0007669"/>
    <property type="project" value="UniProtKB-KW"/>
</dbReference>
<dbReference type="GO" id="GO:0003887">
    <property type="term" value="F:DNA-directed DNA polymerase activity"/>
    <property type="evidence" value="ECO:0007669"/>
    <property type="project" value="UniProtKB-KW"/>
</dbReference>
<dbReference type="GO" id="GO:0046872">
    <property type="term" value="F:metal ion binding"/>
    <property type="evidence" value="ECO:0007669"/>
    <property type="project" value="UniProtKB-KW"/>
</dbReference>
<dbReference type="GO" id="GO:0003964">
    <property type="term" value="F:RNA-directed DNA polymerase activity"/>
    <property type="evidence" value="ECO:0007669"/>
    <property type="project" value="UniProtKB-KW"/>
</dbReference>
<dbReference type="GO" id="GO:0004523">
    <property type="term" value="F:RNA-DNA hybrid ribonuclease activity"/>
    <property type="evidence" value="ECO:0007669"/>
    <property type="project" value="UniProtKB-EC"/>
</dbReference>
<dbReference type="GO" id="GO:0006260">
    <property type="term" value="P:DNA replication"/>
    <property type="evidence" value="ECO:0007669"/>
    <property type="project" value="UniProtKB-KW"/>
</dbReference>
<dbReference type="FunFam" id="3.30.70.270:FF:000009">
    <property type="entry name" value="Protein P"/>
    <property type="match status" value="1"/>
</dbReference>
<dbReference type="Gene3D" id="3.30.70.270">
    <property type="match status" value="1"/>
</dbReference>
<dbReference type="Gene3D" id="3.10.10.10">
    <property type="entry name" value="HIV Type 1 Reverse Transcriptase, subunit A, domain 1"/>
    <property type="match status" value="1"/>
</dbReference>
<dbReference type="InterPro" id="IPR043502">
    <property type="entry name" value="DNA/RNA_pol_sf"/>
</dbReference>
<dbReference type="InterPro" id="IPR001462">
    <property type="entry name" value="DNApol_viral_C"/>
</dbReference>
<dbReference type="InterPro" id="IPR000201">
    <property type="entry name" value="DNApol_viral_N"/>
</dbReference>
<dbReference type="InterPro" id="IPR043128">
    <property type="entry name" value="Rev_trsase/Diguanyl_cyclase"/>
</dbReference>
<dbReference type="InterPro" id="IPR000477">
    <property type="entry name" value="RT_dom"/>
</dbReference>
<dbReference type="InterPro" id="IPR051320">
    <property type="entry name" value="Viral_Replic_Matur_Polypro"/>
</dbReference>
<dbReference type="PANTHER" id="PTHR33064:SF29">
    <property type="entry name" value="PEPTIDASE A2 DOMAIN-CONTAINING PROTEIN-RELATED"/>
    <property type="match status" value="1"/>
</dbReference>
<dbReference type="PANTHER" id="PTHR33064">
    <property type="entry name" value="POL PROTEIN"/>
    <property type="match status" value="1"/>
</dbReference>
<dbReference type="Pfam" id="PF00336">
    <property type="entry name" value="DNA_pol_viral_C"/>
    <property type="match status" value="1"/>
</dbReference>
<dbReference type="Pfam" id="PF00242">
    <property type="entry name" value="DNA_pol_viral_N"/>
    <property type="match status" value="1"/>
</dbReference>
<dbReference type="Pfam" id="PF00078">
    <property type="entry name" value="RVT_1"/>
    <property type="match status" value="1"/>
</dbReference>
<dbReference type="SUPFAM" id="SSF56672">
    <property type="entry name" value="DNA/RNA polymerases"/>
    <property type="match status" value="1"/>
</dbReference>
<dbReference type="PROSITE" id="PS50878">
    <property type="entry name" value="RT_POL"/>
    <property type="match status" value="1"/>
</dbReference>